<gene>
    <name evidence="1" type="primary">rplK</name>
    <name type="ordered locus">AZC_0883</name>
</gene>
<protein>
    <recommendedName>
        <fullName evidence="1">Large ribosomal subunit protein uL11</fullName>
    </recommendedName>
    <alternativeName>
        <fullName evidence="2">50S ribosomal protein L11</fullName>
    </alternativeName>
</protein>
<reference key="1">
    <citation type="submission" date="2007-04" db="EMBL/GenBank/DDBJ databases">
        <title>Complete genome sequence of the nitrogen-fixing bacterium Azorhizobium caulinodans ORS571.</title>
        <authorList>
            <person name="Lee K.B."/>
            <person name="Backer P.D."/>
            <person name="Aono T."/>
            <person name="Liu C.T."/>
            <person name="Suzuki S."/>
            <person name="Suzuki T."/>
            <person name="Kaneko T."/>
            <person name="Yamada M."/>
            <person name="Tabata S."/>
            <person name="Kupfer D.M."/>
            <person name="Najar F.Z."/>
            <person name="Wiley G.B."/>
            <person name="Roe B."/>
            <person name="Binnewies T."/>
            <person name="Ussery D."/>
            <person name="Vereecke D."/>
            <person name="Gevers D."/>
            <person name="Holsters M."/>
            <person name="Oyaizu H."/>
        </authorList>
    </citation>
    <scope>NUCLEOTIDE SEQUENCE [LARGE SCALE GENOMIC DNA]</scope>
    <source>
        <strain>ATCC 43989 / DSM 5975 / JCM 20966 / LMG 6465 / NBRC 14845 / NCIMB 13405 / ORS 571</strain>
    </source>
</reference>
<name>RL11_AZOC5</name>
<feature type="chain" id="PRO_1000072798" description="Large ribosomal subunit protein uL11">
    <location>
        <begin position="1"/>
        <end position="149"/>
    </location>
</feature>
<organism>
    <name type="scientific">Azorhizobium caulinodans (strain ATCC 43989 / DSM 5975 / JCM 20966 / LMG 6465 / NBRC 14845 / NCIMB 13405 / ORS 571)</name>
    <dbReference type="NCBI Taxonomy" id="438753"/>
    <lineage>
        <taxon>Bacteria</taxon>
        <taxon>Pseudomonadati</taxon>
        <taxon>Pseudomonadota</taxon>
        <taxon>Alphaproteobacteria</taxon>
        <taxon>Hyphomicrobiales</taxon>
        <taxon>Xanthobacteraceae</taxon>
        <taxon>Azorhizobium</taxon>
    </lineage>
</organism>
<evidence type="ECO:0000255" key="1">
    <source>
        <dbReference type="HAMAP-Rule" id="MF_00736"/>
    </source>
</evidence>
<evidence type="ECO:0000305" key="2"/>
<dbReference type="EMBL" id="AP009384">
    <property type="protein sequence ID" value="BAF86881.1"/>
    <property type="molecule type" value="Genomic_DNA"/>
</dbReference>
<dbReference type="RefSeq" id="WP_012169414.1">
    <property type="nucleotide sequence ID" value="NC_009937.1"/>
</dbReference>
<dbReference type="SMR" id="A8HTX5"/>
<dbReference type="STRING" id="438753.AZC_0883"/>
<dbReference type="KEGG" id="azc:AZC_0883"/>
<dbReference type="eggNOG" id="COG0080">
    <property type="taxonomic scope" value="Bacteria"/>
</dbReference>
<dbReference type="HOGENOM" id="CLU_074237_2_0_5"/>
<dbReference type="Proteomes" id="UP000000270">
    <property type="component" value="Chromosome"/>
</dbReference>
<dbReference type="GO" id="GO:0022625">
    <property type="term" value="C:cytosolic large ribosomal subunit"/>
    <property type="evidence" value="ECO:0007669"/>
    <property type="project" value="TreeGrafter"/>
</dbReference>
<dbReference type="GO" id="GO:0070180">
    <property type="term" value="F:large ribosomal subunit rRNA binding"/>
    <property type="evidence" value="ECO:0007669"/>
    <property type="project" value="UniProtKB-UniRule"/>
</dbReference>
<dbReference type="GO" id="GO:0003735">
    <property type="term" value="F:structural constituent of ribosome"/>
    <property type="evidence" value="ECO:0007669"/>
    <property type="project" value="InterPro"/>
</dbReference>
<dbReference type="GO" id="GO:0006412">
    <property type="term" value="P:translation"/>
    <property type="evidence" value="ECO:0007669"/>
    <property type="project" value="UniProtKB-UniRule"/>
</dbReference>
<dbReference type="CDD" id="cd00349">
    <property type="entry name" value="Ribosomal_L11"/>
    <property type="match status" value="1"/>
</dbReference>
<dbReference type="FunFam" id="3.30.1550.10:FF:000001">
    <property type="entry name" value="50S ribosomal protein L11"/>
    <property type="match status" value="1"/>
</dbReference>
<dbReference type="Gene3D" id="1.10.10.250">
    <property type="entry name" value="Ribosomal protein L11, C-terminal domain"/>
    <property type="match status" value="1"/>
</dbReference>
<dbReference type="Gene3D" id="3.30.1550.10">
    <property type="entry name" value="Ribosomal protein L11/L12, N-terminal domain"/>
    <property type="match status" value="1"/>
</dbReference>
<dbReference type="HAMAP" id="MF_00736">
    <property type="entry name" value="Ribosomal_uL11"/>
    <property type="match status" value="1"/>
</dbReference>
<dbReference type="InterPro" id="IPR000911">
    <property type="entry name" value="Ribosomal_uL11"/>
</dbReference>
<dbReference type="InterPro" id="IPR006519">
    <property type="entry name" value="Ribosomal_uL11_bac-typ"/>
</dbReference>
<dbReference type="InterPro" id="IPR020783">
    <property type="entry name" value="Ribosomal_uL11_C"/>
</dbReference>
<dbReference type="InterPro" id="IPR036769">
    <property type="entry name" value="Ribosomal_uL11_C_sf"/>
</dbReference>
<dbReference type="InterPro" id="IPR020784">
    <property type="entry name" value="Ribosomal_uL11_N"/>
</dbReference>
<dbReference type="InterPro" id="IPR036796">
    <property type="entry name" value="Ribosomal_uL11_N_sf"/>
</dbReference>
<dbReference type="NCBIfam" id="TIGR01632">
    <property type="entry name" value="L11_bact"/>
    <property type="match status" value="1"/>
</dbReference>
<dbReference type="PANTHER" id="PTHR11661">
    <property type="entry name" value="60S RIBOSOMAL PROTEIN L12"/>
    <property type="match status" value="1"/>
</dbReference>
<dbReference type="PANTHER" id="PTHR11661:SF1">
    <property type="entry name" value="LARGE RIBOSOMAL SUBUNIT PROTEIN UL11M"/>
    <property type="match status" value="1"/>
</dbReference>
<dbReference type="Pfam" id="PF00298">
    <property type="entry name" value="Ribosomal_L11"/>
    <property type="match status" value="1"/>
</dbReference>
<dbReference type="Pfam" id="PF03946">
    <property type="entry name" value="Ribosomal_L11_N"/>
    <property type="match status" value="1"/>
</dbReference>
<dbReference type="SMART" id="SM00649">
    <property type="entry name" value="RL11"/>
    <property type="match status" value="1"/>
</dbReference>
<dbReference type="SUPFAM" id="SSF54747">
    <property type="entry name" value="Ribosomal L11/L12e N-terminal domain"/>
    <property type="match status" value="1"/>
</dbReference>
<dbReference type="SUPFAM" id="SSF46906">
    <property type="entry name" value="Ribosomal protein L11, C-terminal domain"/>
    <property type="match status" value="1"/>
</dbReference>
<proteinExistence type="inferred from homology"/>
<sequence>MAKKITGYVKLQVPAGSANPAPPIGPALGQRGLNIMEFCKAFNAQTAQLEKGMPIPVVITAYQDRSFTFELKTPPVSYFLKKAAGLDTKKKPGSGSKTPGKGATVGKVTRAQLAEIAEKKMKDLNCDNVASAVQMLEGSARSMGLQVEG</sequence>
<keyword id="KW-0488">Methylation</keyword>
<keyword id="KW-1185">Reference proteome</keyword>
<keyword id="KW-0687">Ribonucleoprotein</keyword>
<keyword id="KW-0689">Ribosomal protein</keyword>
<keyword id="KW-0694">RNA-binding</keyword>
<keyword id="KW-0699">rRNA-binding</keyword>
<comment type="function">
    <text evidence="1">Forms part of the ribosomal stalk which helps the ribosome interact with GTP-bound translation factors.</text>
</comment>
<comment type="subunit">
    <text evidence="1">Part of the ribosomal stalk of the 50S ribosomal subunit. Interacts with L10 and the large rRNA to form the base of the stalk. L10 forms an elongated spine to which L12 dimers bind in a sequential fashion forming a multimeric L10(L12)X complex.</text>
</comment>
<comment type="PTM">
    <text evidence="1">One or more lysine residues are methylated.</text>
</comment>
<comment type="similarity">
    <text evidence="1">Belongs to the universal ribosomal protein uL11 family.</text>
</comment>
<accession>A8HTX5</accession>